<proteinExistence type="evidence at protein level"/>
<reference key="1">
    <citation type="journal article" date="2013" name="PLoS Pathog.">
        <title>Deciphering the cryptic genome: genome-wide analyses of the rice pathogen Fusarium fujikuroi reveal complex regulation of secondary metabolism and novel metabolites.</title>
        <authorList>
            <person name="Wiemann P."/>
            <person name="Sieber C.M.K."/>
            <person name="von Bargen K.W."/>
            <person name="Studt L."/>
            <person name="Niehaus E.-M."/>
            <person name="Espino J.J."/>
            <person name="Huss K."/>
            <person name="Michielse C.B."/>
            <person name="Albermann S."/>
            <person name="Wagner D."/>
            <person name="Bergner S.V."/>
            <person name="Connolly L.R."/>
            <person name="Fischer A."/>
            <person name="Reuter G."/>
            <person name="Kleigrewe K."/>
            <person name="Bald T."/>
            <person name="Wingfield B.D."/>
            <person name="Ophir R."/>
            <person name="Freeman S."/>
            <person name="Hippler M."/>
            <person name="Smith K.M."/>
            <person name="Brown D.W."/>
            <person name="Proctor R.H."/>
            <person name="Muensterkoetter M."/>
            <person name="Freitag M."/>
            <person name="Humpf H.-U."/>
            <person name="Gueldener U."/>
            <person name="Tudzynski B."/>
        </authorList>
    </citation>
    <scope>NUCLEOTIDE SEQUENCE [LARGE SCALE GENOMIC DNA]</scope>
    <source>
        <strain>CBS 195.34 / IMI 58289 / NRRL A-6831</strain>
    </source>
</reference>
<reference key="2">
    <citation type="journal article" date="2013" name="J. Nat. Prod.">
        <title>Structure elucidation and antimalarial activity of apicidin F: an apicidin-like compound produced by Fusarium fujikuroi.</title>
        <authorList>
            <person name="von Bargen K.W."/>
            <person name="Niehaus E.M."/>
            <person name="Bergander K."/>
            <person name="Brun R."/>
            <person name="Tudzynski B."/>
            <person name="Humpf H.U."/>
        </authorList>
    </citation>
    <scope>FUNCTION</scope>
    <scope>BIOTECHNOLOGY</scope>
</reference>
<reference key="3">
    <citation type="journal article" date="2014" name="PLoS ONE">
        <title>Apicidin F: characterization and genetic manipulation of a new secondary metabolite gene cluster in the rice pathogen Fusarium fujikuroi.</title>
        <authorList>
            <person name="Niehaus E.M."/>
            <person name="Janevska S."/>
            <person name="von Bargen K.W."/>
            <person name="Sieber C.M."/>
            <person name="Harrer H."/>
            <person name="Humpf H.U."/>
            <person name="Tudzynski B."/>
        </authorList>
    </citation>
    <scope>FUNCTION</scope>
    <scope>INDUCTION</scope>
    <scope>DISRUPTION PHENOTYPE</scope>
</reference>
<comment type="function">
    <text evidence="5 6">FAD-linked oxidoreductase; part of the gene cluster that mediates the biosynthesis of the cyclic tetrapeptide apicidin F (APF) (PubMed:25058475). The non-ribosomal peptide synthetase apf1 incorporates four different amino acids to produce apicidin F: L-phenylalanine, D-pipecolic acid (D-pip), N-methoxy-L-tryptophan and L-2-aminooctanedioic acid (PubMed:25058475). L-Phenylalanine is the only proteinogenic amino acid directly used by apf1 (PubMed:24195442, PubMed:25058475). The 3 other apf1 substrates are non-proteinogenic and have to be modified by other enzymes of the cluster (PubMed:25058475). Lysine is converted to delta-1-pyrroline-5-carboxylate (P5C) which is reduced to L-pipecolic acid (L-pip) by apf3 (PubMed:25058475). L-pip is epimerized to D-pip, probably by apf1 activity, prior to incorporation (PubMed:25058475). L-Tryptophan is N-oxidyzed by one of the cytochrome P450 monooxygenases (apf7 or apf8), and further methylated at the hydroxy group by the O-methyltransferase apf6 to yield N-methoxy-L-tryptophan (PubMed:25058475). The synthesis of the fourth apf1 substrate is more complex (PubMed:25058475). The fatty acid synthase apf5 is involved in the synthesis of the octanoic acid backbone of L-2-aminooctanedioic acid by fixing one acetyl-CoA unit and three malonyl-CoA units (PubMed:25058475). Then one of the cytochrome P450 monooxygenases (apf7 or apf8) may oxidize this backbone to 2-oxooctanoic acid (PubMed:25058475). The aminotransferase apf4 is predicted to catalyze the exchange of the keto group with an amino group (PubMed:25058475). The next step would be the oxidation of 2-aminooctanoic acid by one of the cytochrome P450 monooxygenases (apf7 or apf8). The last step is the oxidation of 2-amino-8-hydroxyoctanoic acid to 2-aminooctanedioic acid is catalyzed by the FAD-dependent monooxygenase apf9 (PubMed:25058475).</text>
</comment>
<comment type="cofactor">
    <cofactor evidence="1">
        <name>FAD</name>
        <dbReference type="ChEBI" id="CHEBI:57692"/>
    </cofactor>
</comment>
<comment type="pathway">
    <text evidence="6">Secondary metabolite biosynthesis.</text>
</comment>
<comment type="induction">
    <text evidence="6">Expression is positively regulated by the apicidin F cluster-specific transcription factor apf2 that binds to the eight-base-pair motif 5'-TGACGTGA-3' called the 'Api-box' that is found in all promoters of the apicidin F cluster except in the promoter region of apf2 itself (PubMed:25058475).</text>
</comment>
<comment type="disruption phenotype">
    <text evidence="6">Leads to the loss of apicidin F production but accumulates apicidin K (PubMed:25058475).</text>
</comment>
<comment type="biotechnology">
    <text evidence="5">Apicidin F, like the other known apicidins, is a cyclic tetrapeptides with anti-malarial properties via histone deacetylase inhibitory activity (PubMed:24195442).</text>
</comment>
<comment type="similarity">
    <text evidence="8">Belongs to the oxygen-dependent FAD-linked oxidoreductase family.</text>
</comment>
<keyword id="KW-0274">FAD</keyword>
<keyword id="KW-0285">Flavoprotein</keyword>
<keyword id="KW-0325">Glycoprotein</keyword>
<keyword id="KW-0560">Oxidoreductase</keyword>
<keyword id="KW-1185">Reference proteome</keyword>
<keyword id="KW-0732">Signal</keyword>
<feature type="signal peptide" evidence="2">
    <location>
        <begin position="1"/>
        <end position="19"/>
    </location>
</feature>
<feature type="chain" id="PRO_5004485041" description="FAD-linked oxidoreductase apf9" evidence="2">
    <location>
        <begin position="20"/>
        <end position="585"/>
    </location>
</feature>
<feature type="domain" description="FAD-binding PCMH-type" evidence="4">
    <location>
        <begin position="108"/>
        <end position="294"/>
    </location>
</feature>
<feature type="modified residue" description="Pros-8alpha-FAD histidine" evidence="1">
    <location>
        <position position="145"/>
    </location>
</feature>
<feature type="glycosylation site" description="N-linked (GlcNAc...) asparagine" evidence="3">
    <location>
        <position position="40"/>
    </location>
</feature>
<feature type="glycosylation site" description="N-linked (GlcNAc...) asparagine" evidence="3">
    <location>
        <position position="92"/>
    </location>
</feature>
<feature type="glycosylation site" description="N-linked (GlcNAc...) asparagine" evidence="3">
    <location>
        <position position="117"/>
    </location>
</feature>
<feature type="glycosylation site" description="N-linked (GlcNAc...) asparagine" evidence="3">
    <location>
        <position position="352"/>
    </location>
</feature>
<feature type="glycosylation site" description="N-linked (GlcNAc...) asparagine" evidence="3">
    <location>
        <position position="412"/>
    </location>
</feature>
<feature type="glycosylation site" description="N-linked (GlcNAc...) asparagine" evidence="3">
    <location>
        <position position="495"/>
    </location>
</feature>
<name>APF9_GIBF5</name>
<protein>
    <recommendedName>
        <fullName evidence="7">FAD-linked oxidoreductase apf9</fullName>
        <ecNumber evidence="9">1.-.-.-</ecNumber>
    </recommendedName>
    <alternativeName>
        <fullName evidence="7">Apicidin F synthesis protein 9</fullName>
    </alternativeName>
</protein>
<gene>
    <name evidence="7" type="primary">apf9</name>
    <name type="ORF">FFUJ_00005</name>
</gene>
<dbReference type="EC" id="1.-.-.-" evidence="9"/>
<dbReference type="EMBL" id="HF679023">
    <property type="protein sequence ID" value="CCT63359.1"/>
    <property type="molecule type" value="Genomic_DNA"/>
</dbReference>
<dbReference type="SMR" id="S0DL65"/>
<dbReference type="STRING" id="1279085.S0DL65"/>
<dbReference type="GlyCosmos" id="S0DL65">
    <property type="glycosylation" value="6 sites, No reported glycans"/>
</dbReference>
<dbReference type="EnsemblFungi" id="CCT63359">
    <property type="protein sequence ID" value="CCT63359"/>
    <property type="gene ID" value="FFUJ_00005"/>
</dbReference>
<dbReference type="VEuPathDB" id="FungiDB:FFUJ_00005"/>
<dbReference type="HOGENOM" id="CLU_018354_4_4_1"/>
<dbReference type="BioCyc" id="MetaCyc:MONOMER-19330"/>
<dbReference type="Proteomes" id="UP000016800">
    <property type="component" value="Chromosome 1"/>
</dbReference>
<dbReference type="GO" id="GO:0071949">
    <property type="term" value="F:FAD binding"/>
    <property type="evidence" value="ECO:0007669"/>
    <property type="project" value="InterPro"/>
</dbReference>
<dbReference type="GO" id="GO:0016491">
    <property type="term" value="F:oxidoreductase activity"/>
    <property type="evidence" value="ECO:0007669"/>
    <property type="project" value="UniProtKB-KW"/>
</dbReference>
<dbReference type="Gene3D" id="3.30.465.10">
    <property type="match status" value="2"/>
</dbReference>
<dbReference type="InterPro" id="IPR012951">
    <property type="entry name" value="BBE"/>
</dbReference>
<dbReference type="InterPro" id="IPR016166">
    <property type="entry name" value="FAD-bd_PCMH"/>
</dbReference>
<dbReference type="InterPro" id="IPR036318">
    <property type="entry name" value="FAD-bd_PCMH-like_sf"/>
</dbReference>
<dbReference type="InterPro" id="IPR016169">
    <property type="entry name" value="FAD-bd_PCMH_sub2"/>
</dbReference>
<dbReference type="InterPro" id="IPR050432">
    <property type="entry name" value="FAD-linked_Oxidoreductases_BP"/>
</dbReference>
<dbReference type="InterPro" id="IPR006094">
    <property type="entry name" value="Oxid_FAD_bind_N"/>
</dbReference>
<dbReference type="InterPro" id="IPR006093">
    <property type="entry name" value="Oxy_OxRdtase_FAD_BS"/>
</dbReference>
<dbReference type="PANTHER" id="PTHR13878:SF91">
    <property type="entry name" value="FAD BINDING DOMAIN PROTEIN (AFU_ORTHOLOGUE AFUA_6G12070)-RELATED"/>
    <property type="match status" value="1"/>
</dbReference>
<dbReference type="PANTHER" id="PTHR13878">
    <property type="entry name" value="GULONOLACTONE OXIDASE"/>
    <property type="match status" value="1"/>
</dbReference>
<dbReference type="Pfam" id="PF08031">
    <property type="entry name" value="BBE"/>
    <property type="match status" value="1"/>
</dbReference>
<dbReference type="Pfam" id="PF01565">
    <property type="entry name" value="FAD_binding_4"/>
    <property type="match status" value="1"/>
</dbReference>
<dbReference type="SUPFAM" id="SSF56176">
    <property type="entry name" value="FAD-binding/transporter-associated domain-like"/>
    <property type="match status" value="1"/>
</dbReference>
<dbReference type="PROSITE" id="PS51387">
    <property type="entry name" value="FAD_PCMH"/>
    <property type="match status" value="1"/>
</dbReference>
<dbReference type="PROSITE" id="PS00862">
    <property type="entry name" value="OX2_COVAL_FAD"/>
    <property type="match status" value="1"/>
</dbReference>
<accession>S0DL65</accession>
<organism>
    <name type="scientific">Gibberella fujikuroi (strain CBS 195.34 / IMI 58289 / NRRL A-6831)</name>
    <name type="common">Bakanae and foot rot disease fungus</name>
    <name type="synonym">Fusarium fujikuroi</name>
    <dbReference type="NCBI Taxonomy" id="1279085"/>
    <lineage>
        <taxon>Eukaryota</taxon>
        <taxon>Fungi</taxon>
        <taxon>Dikarya</taxon>
        <taxon>Ascomycota</taxon>
        <taxon>Pezizomycotina</taxon>
        <taxon>Sordariomycetes</taxon>
        <taxon>Hypocreomycetidae</taxon>
        <taxon>Hypocreales</taxon>
        <taxon>Nectriaceae</taxon>
        <taxon>Fusarium</taxon>
        <taxon>Fusarium fujikuroi species complex</taxon>
    </lineage>
</organism>
<sequence length="585" mass="63587">MKPHTVSLVLSNLASLAAATCKCTPGHACWPSLEEWSRFNSSIGGQLIQSSPVAEACYSGPKDNAACQNIEKSWTDDVFQVSQPIGYAWPLNLSCPLPTPGLDTKCSIGNSPVYVVNVTCEEDITRGIKFAQEKNLRLVVKSTGHDSQQRSTGYGSLSIWLHNFRKGFRFQGHNPVLATCPKSGWKGSTLTINGGYSWRDIYPAAQKQGLIVIGGLDRGPCSTGGWTQGGGHSPGTHYFGIGADQVLSARVVLASGKIVVASPCENEDLFFAIRGGGGGTFGVVTEITVKTYPTKALSTINLIVGSKGDETVPKFLDAVATIYSLLPGLSKKGFAGYGNWVVRALSPITAKNYTNLYGQSWTLLGATQQEAENLFQPFKEEIVKHQSENGLEVTVSSGTFRDYFSYYYSMGNGTDSAVGGVSALASRLLDTEALQGNRKDLRKFLDSITQGSAVYHTLIHHGLEAAADVKADPTSAVLPGWYKSILLDEFEIPMNTTDVDAYAGSFEYLRNELVPLYESLSPDTGTYMNEADWGNMNWKKDFFGSHWDRLLKVKTRYDPEGFFYCPKCVGSDDWVENKGGSLCRA</sequence>
<evidence type="ECO:0000250" key="1">
    <source>
        <dbReference type="UniProtKB" id="P08159"/>
    </source>
</evidence>
<evidence type="ECO:0000255" key="2"/>
<evidence type="ECO:0000255" key="3">
    <source>
        <dbReference type="PROSITE-ProRule" id="PRU00498"/>
    </source>
</evidence>
<evidence type="ECO:0000255" key="4">
    <source>
        <dbReference type="PROSITE-ProRule" id="PRU00718"/>
    </source>
</evidence>
<evidence type="ECO:0000269" key="5">
    <source>
    </source>
</evidence>
<evidence type="ECO:0000269" key="6">
    <source>
    </source>
</evidence>
<evidence type="ECO:0000303" key="7">
    <source>
    </source>
</evidence>
<evidence type="ECO:0000305" key="8"/>
<evidence type="ECO:0000305" key="9">
    <source>
    </source>
</evidence>